<reference key="1">
    <citation type="journal article" date="2000" name="Nature">
        <title>Genome sequence of the endocellular bacterial symbiont of aphids Buchnera sp. APS.</title>
        <authorList>
            <person name="Shigenobu S."/>
            <person name="Watanabe H."/>
            <person name="Hattori M."/>
            <person name="Sakaki Y."/>
            <person name="Ishikawa H."/>
        </authorList>
    </citation>
    <scope>NUCLEOTIDE SEQUENCE [LARGE SCALE GENOMIC DNA]</scope>
    <source>
        <strain>APS</strain>
    </source>
</reference>
<evidence type="ECO:0000255" key="1">
    <source>
        <dbReference type="HAMAP-Rule" id="MF_00389"/>
    </source>
</evidence>
<keyword id="KW-0963">Cytoplasm</keyword>
<keyword id="KW-1185">Reference proteome</keyword>
<keyword id="KW-0819">tRNA processing</keyword>
<protein>
    <recommendedName>
        <fullName evidence="1">Protein TusC</fullName>
    </recommendedName>
    <alternativeName>
        <fullName evidence="1">tRNA 2-thiouridine synthesizing protein C</fullName>
    </alternativeName>
</protein>
<accession>P57597</accession>
<feature type="chain" id="PRO_0000214880" description="Protein TusC">
    <location>
        <begin position="1"/>
        <end position="119"/>
    </location>
</feature>
<organism>
    <name type="scientific">Buchnera aphidicola subsp. Acyrthosiphon pisum (strain APS)</name>
    <name type="common">Acyrthosiphon pisum symbiotic bacterium</name>
    <dbReference type="NCBI Taxonomy" id="107806"/>
    <lineage>
        <taxon>Bacteria</taxon>
        <taxon>Pseudomonadati</taxon>
        <taxon>Pseudomonadota</taxon>
        <taxon>Gammaproteobacteria</taxon>
        <taxon>Enterobacterales</taxon>
        <taxon>Erwiniaceae</taxon>
        <taxon>Buchnera</taxon>
    </lineage>
</organism>
<proteinExistence type="inferred from homology"/>
<gene>
    <name evidence="1" type="primary">tusC</name>
    <name type="ordered locus">BU531</name>
</gene>
<name>TUSC_BUCAI</name>
<sequence>MKMVAFVFSHAPHGISLGREGLDAIFSISSIFKKISVFFIGDGVLQLIKNQQPEHILARNYTSSFSILSLYNIKDLYCCKASLLERGLNNNNNFILNIDVLDSYNLRLKLDNYDAIINF</sequence>
<comment type="function">
    <text evidence="1">Part of a sulfur-relay system required for 2-thiolation of 5-methylaminomethyl-2-thiouridine (mnm(5)s(2)U) at tRNA wobble positions.</text>
</comment>
<comment type="subunit">
    <text evidence="1">Heterohexamer, formed by a dimer of trimers. The hexameric TusBCD complex contains 2 copies each of TusB, TusC and TusD. The TusBCD complex interacts with TusE.</text>
</comment>
<comment type="subcellular location">
    <subcellularLocation>
        <location evidence="1">Cytoplasm</location>
    </subcellularLocation>
</comment>
<comment type="similarity">
    <text evidence="1">Belongs to the DsrF/TusC family.</text>
</comment>
<dbReference type="EMBL" id="BA000003">
    <property type="protein sequence ID" value="BAB13224.1"/>
    <property type="molecule type" value="Genomic_DNA"/>
</dbReference>
<dbReference type="RefSeq" id="NP_240338.1">
    <property type="nucleotide sequence ID" value="NC_002528.1"/>
</dbReference>
<dbReference type="RefSeq" id="WP_010896150.1">
    <property type="nucleotide sequence ID" value="NZ_AP036055.1"/>
</dbReference>
<dbReference type="SMR" id="P57597"/>
<dbReference type="STRING" id="563178.BUAP5A_524"/>
<dbReference type="EnsemblBacteria" id="BAB13224">
    <property type="protein sequence ID" value="BAB13224"/>
    <property type="gene ID" value="BAB13224"/>
</dbReference>
<dbReference type="KEGG" id="buc:BU531"/>
<dbReference type="PATRIC" id="fig|107806.10.peg.536"/>
<dbReference type="eggNOG" id="COG2923">
    <property type="taxonomic scope" value="Bacteria"/>
</dbReference>
<dbReference type="HOGENOM" id="CLU_155943_1_0_6"/>
<dbReference type="Proteomes" id="UP000001806">
    <property type="component" value="Chromosome"/>
</dbReference>
<dbReference type="GO" id="GO:0005737">
    <property type="term" value="C:cytoplasm"/>
    <property type="evidence" value="ECO:0007669"/>
    <property type="project" value="UniProtKB-SubCell"/>
</dbReference>
<dbReference type="GO" id="GO:0008033">
    <property type="term" value="P:tRNA processing"/>
    <property type="evidence" value="ECO:0007669"/>
    <property type="project" value="UniProtKB-UniRule"/>
</dbReference>
<dbReference type="Gene3D" id="3.40.1260.10">
    <property type="entry name" value="DsrEFH-like"/>
    <property type="match status" value="1"/>
</dbReference>
<dbReference type="HAMAP" id="MF_00389">
    <property type="entry name" value="Thiourid_synth_C"/>
    <property type="match status" value="1"/>
</dbReference>
<dbReference type="InterPro" id="IPR027396">
    <property type="entry name" value="DsrEFH-like"/>
</dbReference>
<dbReference type="InterPro" id="IPR003787">
    <property type="entry name" value="Sulphur_relay_DsrE/F-like"/>
</dbReference>
<dbReference type="InterPro" id="IPR037450">
    <property type="entry name" value="Sulphur_relay_TusC"/>
</dbReference>
<dbReference type="InterPro" id="IPR017462">
    <property type="entry name" value="Sulphur_relay_TusC/DsrF"/>
</dbReference>
<dbReference type="NCBIfam" id="NF001238">
    <property type="entry name" value="PRK00211.1"/>
    <property type="match status" value="1"/>
</dbReference>
<dbReference type="NCBIfam" id="TIGR03010">
    <property type="entry name" value="sulf_tusC_dsrF"/>
    <property type="match status" value="1"/>
</dbReference>
<dbReference type="PANTHER" id="PTHR38780">
    <property type="entry name" value="PROTEIN TUSC"/>
    <property type="match status" value="1"/>
</dbReference>
<dbReference type="PANTHER" id="PTHR38780:SF1">
    <property type="entry name" value="PROTEIN TUSC"/>
    <property type="match status" value="1"/>
</dbReference>
<dbReference type="Pfam" id="PF02635">
    <property type="entry name" value="DsrE"/>
    <property type="match status" value="1"/>
</dbReference>
<dbReference type="SUPFAM" id="SSF75169">
    <property type="entry name" value="DsrEFH-like"/>
    <property type="match status" value="1"/>
</dbReference>